<organism>
    <name type="scientific">Mus musculus</name>
    <name type="common">Mouse</name>
    <dbReference type="NCBI Taxonomy" id="10090"/>
    <lineage>
        <taxon>Eukaryota</taxon>
        <taxon>Metazoa</taxon>
        <taxon>Chordata</taxon>
        <taxon>Craniata</taxon>
        <taxon>Vertebrata</taxon>
        <taxon>Euteleostomi</taxon>
        <taxon>Mammalia</taxon>
        <taxon>Eutheria</taxon>
        <taxon>Euarchontoglires</taxon>
        <taxon>Glires</taxon>
        <taxon>Rodentia</taxon>
        <taxon>Myomorpha</taxon>
        <taxon>Muroidea</taxon>
        <taxon>Muridae</taxon>
        <taxon>Murinae</taxon>
        <taxon>Mus</taxon>
        <taxon>Mus</taxon>
    </lineage>
</organism>
<gene>
    <name evidence="10" type="primary">Bsx</name>
</gene>
<keyword id="KW-0010">Activator</keyword>
<keyword id="KW-0025">Alternative splicing</keyword>
<keyword id="KW-0963">Cytoplasm</keyword>
<keyword id="KW-0238">DNA-binding</keyword>
<keyword id="KW-0371">Homeobox</keyword>
<keyword id="KW-0539">Nucleus</keyword>
<keyword id="KW-1185">Reference proteome</keyword>
<keyword id="KW-0804">Transcription</keyword>
<keyword id="KW-0805">Transcription regulation</keyword>
<comment type="function">
    <text evidence="5 6 7">DNA binding protein that function as transcriptional activator. Is essential for normal postnatal growth and nursing. Is an essential factor for neuronal neuropeptide Y and agouti-related peptide function and locomotory behavior in the control of energy balance.</text>
</comment>
<comment type="subcellular location">
    <molecule>Isoform 1</molecule>
    <subcellularLocation>
        <location evidence="5">Nucleus</location>
    </subcellularLocation>
</comment>
<comment type="subcellular location">
    <molecule>Isoform 2</molecule>
    <subcellularLocation>
        <location evidence="5">Cytoplasm</location>
    </subcellularLocation>
</comment>
<comment type="alternative products">
    <event type="alternative splicing"/>
    <isoform>
        <id>Q810B3-1</id>
        <name>1</name>
        <name>Bsxla</name>
        <sequence type="displayed"/>
    </isoform>
    <isoform>
        <id>Q810B3-2</id>
        <name>2</name>
        <name>Bsxlb</name>
        <sequence type="described" ref="VSP_027570 VSP_027571"/>
    </isoform>
</comment>
<comment type="tissue specificity">
    <text evidence="4">Expressed in brain. In brain, it is restricted to a few specific developing brain structures such as pineal gland, telencephalic septum, hypothalamic pre-mammillary body and arcuate nucleus.</text>
</comment>
<comment type="developmental stage">
    <text evidence="4">Expressed in early embryonic stages of epiphysis development from 9.5 dpc onwards.</text>
</comment>
<comment type="similarity">
    <text evidence="1">Belongs to the distal-less homeobox family.</text>
</comment>
<comment type="online information" name="Protein Spotlight">
    <link uri="https://www.proteinspotlight.org/back_issues/085"/>
    <text>Of fidgets and food - Issue 85 of August 2007</text>
</comment>
<accession>Q810B3</accession>
<accession>Q3SXB1</accession>
<feature type="chain" id="PRO_0000048844" description="Brain-specific homeobox protein homolog">
    <location>
        <begin position="1"/>
        <end position="232"/>
    </location>
</feature>
<feature type="DNA-binding region" description="Homeobox" evidence="2">
    <location>
        <begin position="108"/>
        <end position="168"/>
    </location>
</feature>
<feature type="region of interest" description="Disordered" evidence="3">
    <location>
        <begin position="160"/>
        <end position="232"/>
    </location>
</feature>
<feature type="compositionally biased region" description="Basic residues" evidence="3">
    <location>
        <begin position="161"/>
        <end position="170"/>
    </location>
</feature>
<feature type="compositionally biased region" description="Basic and acidic residues" evidence="3">
    <location>
        <begin position="171"/>
        <end position="180"/>
    </location>
</feature>
<feature type="compositionally biased region" description="Acidic residues" evidence="3">
    <location>
        <begin position="212"/>
        <end position="224"/>
    </location>
</feature>
<feature type="splice variant" id="VSP_027570" description="In isoform 2." evidence="9">
    <original>GMPVPALFPHPQHAELPGKHCRRRKARTVFSDSQLSGLEKRFEI</original>
    <variation>ALRPGEKVRNPALPVDARACGAHCPQPLRDSGENVVPEPADEA</variation>
    <location>
        <begin position="88"/>
        <end position="131"/>
    </location>
</feature>
<feature type="splice variant" id="VSP_027571" description="In isoform 2." evidence="9">
    <location>
        <begin position="132"/>
        <end position="232"/>
    </location>
</feature>
<feature type="mutagenesis site" description="Abolishes the nuclear localization; when associated with G-101." evidence="5">
    <original>R</original>
    <variation>G</variation>
    <location>
        <position position="109"/>
    </location>
</feature>
<feature type="mutagenesis site" description="Abolishes the nuclear localization; when associated with G-109." evidence="5">
    <original>R</original>
    <variation>G</variation>
    <location>
        <position position="111"/>
    </location>
</feature>
<evidence type="ECO:0000255" key="1"/>
<evidence type="ECO:0000255" key="2">
    <source>
        <dbReference type="PROSITE-ProRule" id="PRU00108"/>
    </source>
</evidence>
<evidence type="ECO:0000256" key="3">
    <source>
        <dbReference type="SAM" id="MobiDB-lite"/>
    </source>
</evidence>
<evidence type="ECO:0000269" key="4">
    <source>
    </source>
</evidence>
<evidence type="ECO:0000269" key="5">
    <source>
    </source>
</evidence>
<evidence type="ECO:0000269" key="6">
    <source>
    </source>
</evidence>
<evidence type="ECO:0000269" key="7">
    <source>
    </source>
</evidence>
<evidence type="ECO:0000269" key="8">
    <source ref="1"/>
</evidence>
<evidence type="ECO:0000303" key="9">
    <source>
    </source>
</evidence>
<evidence type="ECO:0000312" key="10">
    <source>
        <dbReference type="EMBL" id="AAO84023.1"/>
    </source>
</evidence>
<sequence>MNLNFTSPLHPASSQRPTSFFIEDILLHKPKPLREVAPDHFASSLASRVPLLDYGYPLMPTPTLLTPHAHHPLHKGDHHHPYFLTTSGMPVPALFPHPQHAELPGKHCRRRKARTVFSDSQLSGLEKRFEIQRYLSTPERVELATALSLSETQVKTWFQNRRMKHKKQLRKSQDEPKAADGPESPEGSPRAPEGAPADARLSLPAGAFVLTEPEDEVDIGDEGELSSGPHVL</sequence>
<name>BSH_MOUSE</name>
<protein>
    <recommendedName>
        <fullName>Brain-specific homeobox protein homolog</fullName>
    </recommendedName>
</protein>
<reference evidence="10" key="1">
    <citation type="submission" date="2003-02" db="EMBL/GenBank/DDBJ databases">
        <title>Identification of vertebrate homologs of the Drosophila brain-specific homeobox gene.</title>
        <authorList>
            <person name="Assimacopoulos S."/>
            <person name="Ragsdale C.W."/>
        </authorList>
    </citation>
    <scope>NUCLEOTIDE SEQUENCE [MRNA]</scope>
    <source>
        <strain evidence="10">CD-1</strain>
        <tissue evidence="8">Hypothalamus</tissue>
        <tissue evidence="8">Pineal gland</tissue>
    </source>
</reference>
<reference key="2">
    <citation type="journal article" date="2007" name="Mol. Cell. Biol.">
        <title>Cloning and functional analysis of hypothalamic homeobox gene Bsx1a and its isoform, Bsx1b.</title>
        <authorList>
            <person name="Chu H.-Y."/>
            <person name="Ohtoshi A."/>
        </authorList>
    </citation>
    <scope>NUCLEOTIDE SEQUENCE [MRNA] (ISOFORMS 1 AND 2)</scope>
    <scope>FUNCTION</scope>
    <scope>MUTAGENESIS OF ARG-109 AND ARG-111</scope>
    <scope>SUBCELLULAR LOCATION</scope>
</reference>
<reference key="3">
    <citation type="journal article" date="2004" name="Genome Res.">
        <title>The status, quality, and expansion of the NIH full-length cDNA project: the Mammalian Gene Collection (MGC).</title>
        <authorList>
            <consortium name="The MGC Project Team"/>
        </authorList>
    </citation>
    <scope>NUCLEOTIDE SEQUENCE [LARGE SCALE MRNA] (ISOFORM 1)</scope>
</reference>
<reference key="4">
    <citation type="journal article" date="2004" name="Gene Expr. Patterns">
        <title>Bsx, an evolutionary conserved brain specific homeobox gene expressed in the septum, epiphysis, mammillary bodies and arcuate nucleus.</title>
        <authorList>
            <person name="Cremona M."/>
            <person name="Colombo E."/>
            <person name="Andreazzoli M."/>
            <person name="Cossu G."/>
            <person name="Broccoli V."/>
        </authorList>
    </citation>
    <scope>TISSUE SPECIFICITY</scope>
    <scope>DEVELOPMENTAL STAGE</scope>
</reference>
<reference key="5">
    <citation type="journal article" date="2007" name="Cell Metab.">
        <title>A role for brain-specific homeobox factor bsx in the control of hyperphagia and locomotory behavior.</title>
        <authorList>
            <person name="Sakkou M."/>
            <person name="Wiedmer P."/>
            <person name="Anlag K."/>
            <person name="Hamm A."/>
            <person name="Seuntjens E."/>
            <person name="Ettwiller L."/>
            <person name="Tschoep M.H."/>
            <person name="Treier M."/>
        </authorList>
    </citation>
    <scope>FUNCTION</scope>
</reference>
<reference key="6">
    <citation type="journal article" date="2007" name="Mol. Cell. Biol.">
        <title>A brain-specific homeobox gene, bsx, is essential for proper postnatal growth and nursing.</title>
        <authorList>
            <person name="McArthur T."/>
            <person name="Ohtoshi A."/>
        </authorList>
    </citation>
    <scope>FUNCTION</scope>
</reference>
<dbReference type="EMBL" id="AY233396">
    <property type="protein sequence ID" value="AAO84023.1"/>
    <property type="molecule type" value="mRNA"/>
</dbReference>
<dbReference type="EMBL" id="BC104386">
    <property type="protein sequence ID" value="AAI04387.1"/>
    <property type="molecule type" value="mRNA"/>
</dbReference>
<dbReference type="EMBL" id="BC104387">
    <property type="protein sequence ID" value="AAI04388.1"/>
    <property type="molecule type" value="mRNA"/>
</dbReference>
<dbReference type="CCDS" id="CCDS23084.1">
    <molecule id="Q810B3-1"/>
</dbReference>
<dbReference type="RefSeq" id="NP_839976.1">
    <molecule id="Q810B3-1"/>
    <property type="nucleotide sequence ID" value="NM_178245.3"/>
</dbReference>
<dbReference type="RefSeq" id="XP_036010875.1">
    <molecule id="Q810B3-1"/>
    <property type="nucleotide sequence ID" value="XM_036154982.1"/>
</dbReference>
<dbReference type="SMR" id="Q810B3"/>
<dbReference type="BioGRID" id="232691">
    <property type="interactions" value="2"/>
</dbReference>
<dbReference type="FunCoup" id="Q810B3">
    <property type="interactions" value="450"/>
</dbReference>
<dbReference type="STRING" id="10090.ENSMUSP00000068057"/>
<dbReference type="GlyGen" id="Q810B3">
    <property type="glycosylation" value="1 site"/>
</dbReference>
<dbReference type="PhosphoSitePlus" id="Q810B3"/>
<dbReference type="PaxDb" id="10090-ENSMUSP00000068057"/>
<dbReference type="Antibodypedia" id="9208">
    <property type="antibodies" value="99 antibodies from 18 providers"/>
</dbReference>
<dbReference type="DNASU" id="244813"/>
<dbReference type="Ensembl" id="ENSMUST00000067375.5">
    <molecule id="Q810B3-1"/>
    <property type="protein sequence ID" value="ENSMUSP00000068057.4"/>
    <property type="gene ID" value="ENSMUSG00000054360.5"/>
</dbReference>
<dbReference type="GeneID" id="244813"/>
<dbReference type="KEGG" id="mmu:244813"/>
<dbReference type="UCSC" id="uc009paa.1">
    <molecule id="Q810B3-1"/>
    <property type="organism name" value="mouse"/>
</dbReference>
<dbReference type="AGR" id="MGI:2669849"/>
<dbReference type="CTD" id="390259"/>
<dbReference type="MGI" id="MGI:2669849">
    <property type="gene designation" value="Bsx"/>
</dbReference>
<dbReference type="VEuPathDB" id="HostDB:ENSMUSG00000054360"/>
<dbReference type="eggNOG" id="KOG0491">
    <property type="taxonomic scope" value="Eukaryota"/>
</dbReference>
<dbReference type="GeneTree" id="ENSGT00940000161473"/>
<dbReference type="HOGENOM" id="CLU_104234_0_0_1"/>
<dbReference type="InParanoid" id="Q810B3"/>
<dbReference type="OMA" id="DLPGKHC"/>
<dbReference type="OrthoDB" id="6159439at2759"/>
<dbReference type="PhylomeDB" id="Q810B3"/>
<dbReference type="TreeFam" id="TF350735"/>
<dbReference type="BioGRID-ORCS" id="244813">
    <property type="hits" value="4 hits in 78 CRISPR screens"/>
</dbReference>
<dbReference type="PRO" id="PR:Q810B3"/>
<dbReference type="Proteomes" id="UP000000589">
    <property type="component" value="Chromosome 9"/>
</dbReference>
<dbReference type="RNAct" id="Q810B3">
    <property type="molecule type" value="protein"/>
</dbReference>
<dbReference type="Bgee" id="ENSMUSG00000054360">
    <property type="expression patterns" value="Expressed in ureteric bud trunk and 16 other cell types or tissues"/>
</dbReference>
<dbReference type="GO" id="GO:0005737">
    <property type="term" value="C:cytoplasm"/>
    <property type="evidence" value="ECO:0000314"/>
    <property type="project" value="MGI"/>
</dbReference>
<dbReference type="GO" id="GO:0005634">
    <property type="term" value="C:nucleus"/>
    <property type="evidence" value="ECO:0000314"/>
    <property type="project" value="MGI"/>
</dbReference>
<dbReference type="GO" id="GO:0005667">
    <property type="term" value="C:transcription regulator complex"/>
    <property type="evidence" value="ECO:0000314"/>
    <property type="project" value="MGI"/>
</dbReference>
<dbReference type="GO" id="GO:0001228">
    <property type="term" value="F:DNA-binding transcription activator activity, RNA polymerase II-specific"/>
    <property type="evidence" value="ECO:0000314"/>
    <property type="project" value="NTNU_SB"/>
</dbReference>
<dbReference type="GO" id="GO:0003700">
    <property type="term" value="F:DNA-binding transcription factor activity"/>
    <property type="evidence" value="ECO:0000314"/>
    <property type="project" value="MGI"/>
</dbReference>
<dbReference type="GO" id="GO:0000981">
    <property type="term" value="F:DNA-binding transcription factor activity, RNA polymerase II-specific"/>
    <property type="evidence" value="ECO:0007669"/>
    <property type="project" value="InterPro"/>
</dbReference>
<dbReference type="GO" id="GO:0000978">
    <property type="term" value="F:RNA polymerase II cis-regulatory region sequence-specific DNA binding"/>
    <property type="evidence" value="ECO:0000314"/>
    <property type="project" value="NTNU_SB"/>
</dbReference>
<dbReference type="GO" id="GO:0043565">
    <property type="term" value="F:sequence-specific DNA binding"/>
    <property type="evidence" value="ECO:0000314"/>
    <property type="project" value="MGI"/>
</dbReference>
<dbReference type="GO" id="GO:1990837">
    <property type="term" value="F:sequence-specific double-stranded DNA binding"/>
    <property type="evidence" value="ECO:0007669"/>
    <property type="project" value="Ensembl"/>
</dbReference>
<dbReference type="GO" id="GO:0007420">
    <property type="term" value="P:brain development"/>
    <property type="evidence" value="ECO:0000250"/>
    <property type="project" value="UniProtKB"/>
</dbReference>
<dbReference type="GO" id="GO:0042755">
    <property type="term" value="P:eating behavior"/>
    <property type="evidence" value="ECO:0000315"/>
    <property type="project" value="MGI"/>
</dbReference>
<dbReference type="GO" id="GO:0007626">
    <property type="term" value="P:locomotory behavior"/>
    <property type="evidence" value="ECO:0000315"/>
    <property type="project" value="MGI"/>
</dbReference>
<dbReference type="GO" id="GO:0060056">
    <property type="term" value="P:mammary gland involution"/>
    <property type="evidence" value="ECO:0000315"/>
    <property type="project" value="MGI"/>
</dbReference>
<dbReference type="GO" id="GO:0045944">
    <property type="term" value="P:positive regulation of transcription by RNA polymerase II"/>
    <property type="evidence" value="ECO:0000314"/>
    <property type="project" value="NTNU_SB"/>
</dbReference>
<dbReference type="CDD" id="cd00086">
    <property type="entry name" value="homeodomain"/>
    <property type="match status" value="1"/>
</dbReference>
<dbReference type="FunFam" id="1.10.10.60:FF:000173">
    <property type="entry name" value="brain-specific homeobox protein homolog"/>
    <property type="match status" value="1"/>
</dbReference>
<dbReference type="Gene3D" id="1.10.10.60">
    <property type="entry name" value="Homeodomain-like"/>
    <property type="match status" value="1"/>
</dbReference>
<dbReference type="InterPro" id="IPR001356">
    <property type="entry name" value="HD"/>
</dbReference>
<dbReference type="InterPro" id="IPR020479">
    <property type="entry name" value="HD_metazoa"/>
</dbReference>
<dbReference type="InterPro" id="IPR017970">
    <property type="entry name" value="Homeobox_CS"/>
</dbReference>
<dbReference type="InterPro" id="IPR050848">
    <property type="entry name" value="Homeobox_TF"/>
</dbReference>
<dbReference type="InterPro" id="IPR009057">
    <property type="entry name" value="Homeodomain-like_sf"/>
</dbReference>
<dbReference type="PANTHER" id="PTHR24333:SF16">
    <property type="entry name" value="BRAIN-SPECIFIC HOMEOBOX"/>
    <property type="match status" value="1"/>
</dbReference>
<dbReference type="PANTHER" id="PTHR24333">
    <property type="entry name" value="HOMEO BOX HB9 LIKE A-RELATED"/>
    <property type="match status" value="1"/>
</dbReference>
<dbReference type="Pfam" id="PF00046">
    <property type="entry name" value="Homeodomain"/>
    <property type="match status" value="1"/>
</dbReference>
<dbReference type="PRINTS" id="PR00024">
    <property type="entry name" value="HOMEOBOX"/>
</dbReference>
<dbReference type="SMART" id="SM00389">
    <property type="entry name" value="HOX"/>
    <property type="match status" value="1"/>
</dbReference>
<dbReference type="SUPFAM" id="SSF46689">
    <property type="entry name" value="Homeodomain-like"/>
    <property type="match status" value="1"/>
</dbReference>
<dbReference type="PROSITE" id="PS00027">
    <property type="entry name" value="HOMEOBOX_1"/>
    <property type="match status" value="1"/>
</dbReference>
<dbReference type="PROSITE" id="PS50071">
    <property type="entry name" value="HOMEOBOX_2"/>
    <property type="match status" value="1"/>
</dbReference>
<proteinExistence type="evidence at protein level"/>